<proteinExistence type="evidence at protein level"/>
<feature type="chain" id="PRO_0000073115" description="Ovomucoid">
    <location>
        <begin position="1" status="less than"/>
        <end position="54" status="greater than"/>
    </location>
</feature>
<feature type="domain" description="Kazal-like" evidence="1">
    <location>
        <begin position="4"/>
        <end position="54"/>
    </location>
</feature>
<feature type="site" description="Reactive bond 3">
    <location>
        <begin position="16"/>
        <end position="17"/>
    </location>
</feature>
<feature type="glycosylation site" description="N-linked (GlcNAc...) asparagine">
    <location>
        <position position="43"/>
    </location>
</feature>
<feature type="disulfide bond">
    <location>
        <begin position="6"/>
        <end position="36"/>
    </location>
</feature>
<feature type="disulfide bond">
    <location>
        <begin position="14"/>
        <end position="33"/>
    </location>
</feature>
<feature type="disulfide bond">
    <location>
        <begin position="22"/>
        <end position="54"/>
    </location>
</feature>
<feature type="non-terminal residue">
    <location>
        <position position="1"/>
    </location>
</feature>
<feature type="non-terminal residue">
    <location>
        <position position="54"/>
    </location>
</feature>
<comment type="subcellular location">
    <subcellularLocation>
        <location>Secreted</location>
    </subcellularLocation>
</comment>
<comment type="domain">
    <text>Avian ovomucoid consists of three homologous, tandem Kazal family inhibitory domains.</text>
</comment>
<name>IOVO_GALCH</name>
<keyword id="KW-0903">Direct protein sequencing</keyword>
<keyword id="KW-1015">Disulfide bond</keyword>
<keyword id="KW-0325">Glycoprotein</keyword>
<keyword id="KW-0646">Protease inhibitor</keyword>
<keyword id="KW-0677">Repeat</keyword>
<keyword id="KW-0964">Secreted</keyword>
<keyword id="KW-0722">Serine protease inhibitor</keyword>
<sequence length="54" mass="5732">TATVDCSGYPQPACSLEYVPFCGSDNKTYSNKCDFCNAVADSNGTLTLSHFGKC</sequence>
<reference key="1">
    <citation type="journal article" date="1990" name="J. Protein Chem.">
        <title>Amino acid sequences of ovomucoid third domain from 25 additional species of birds.</title>
        <authorList>
            <person name="Laskowski M. Jr."/>
            <person name="Apostol I."/>
            <person name="Ardelt W."/>
            <person name="Cook J."/>
            <person name="Giletto A."/>
            <person name="Kelly C.A."/>
            <person name="Lu W."/>
            <person name="Park S.J."/>
            <person name="Qasim M.A."/>
            <person name="Whatley H.E."/>
            <person name="Wieczorek A."/>
            <person name="Wynn R."/>
        </authorList>
    </citation>
    <scope>PROTEIN SEQUENCE</scope>
</reference>
<dbReference type="PIR" id="E61494">
    <property type="entry name" value="E61494"/>
</dbReference>
<dbReference type="SMR" id="P68379"/>
<dbReference type="GO" id="GO:0005576">
    <property type="term" value="C:extracellular region"/>
    <property type="evidence" value="ECO:0007669"/>
    <property type="project" value="UniProtKB-SubCell"/>
</dbReference>
<dbReference type="GO" id="GO:0004867">
    <property type="term" value="F:serine-type endopeptidase inhibitor activity"/>
    <property type="evidence" value="ECO:0007669"/>
    <property type="project" value="UniProtKB-KW"/>
</dbReference>
<dbReference type="CDD" id="cd00104">
    <property type="entry name" value="KAZAL_FS"/>
    <property type="match status" value="1"/>
</dbReference>
<dbReference type="FunFam" id="3.30.60.30:FF:000037">
    <property type="entry name" value="Ovomucoid"/>
    <property type="match status" value="1"/>
</dbReference>
<dbReference type="Gene3D" id="3.30.60.30">
    <property type="match status" value="1"/>
</dbReference>
<dbReference type="InterPro" id="IPR051597">
    <property type="entry name" value="Bifunctional_prot_inhibitor"/>
</dbReference>
<dbReference type="InterPro" id="IPR002350">
    <property type="entry name" value="Kazal_dom"/>
</dbReference>
<dbReference type="InterPro" id="IPR036058">
    <property type="entry name" value="Kazal_dom_sf"/>
</dbReference>
<dbReference type="InterPro" id="IPR001239">
    <property type="entry name" value="Prot_inh_Kazal-m"/>
</dbReference>
<dbReference type="PANTHER" id="PTHR47729:SF1">
    <property type="entry name" value="OVOMUCOID-LIKE-RELATED"/>
    <property type="match status" value="1"/>
</dbReference>
<dbReference type="PANTHER" id="PTHR47729">
    <property type="entry name" value="SERINE PEPTIDASE INHIBITOR, KAZAL TYPE 2, TANDEM DUPLICATE 1-RELATED"/>
    <property type="match status" value="1"/>
</dbReference>
<dbReference type="Pfam" id="PF00050">
    <property type="entry name" value="Kazal_1"/>
    <property type="match status" value="1"/>
</dbReference>
<dbReference type="PRINTS" id="PR00290">
    <property type="entry name" value="KAZALINHBTR"/>
</dbReference>
<dbReference type="SMART" id="SM00280">
    <property type="entry name" value="KAZAL"/>
    <property type="match status" value="1"/>
</dbReference>
<dbReference type="SUPFAM" id="SSF100895">
    <property type="entry name" value="Kazal-type serine protease inhibitors"/>
    <property type="match status" value="1"/>
</dbReference>
<dbReference type="PROSITE" id="PS00282">
    <property type="entry name" value="KAZAL_1"/>
    <property type="match status" value="1"/>
</dbReference>
<dbReference type="PROSITE" id="PS51465">
    <property type="entry name" value="KAZAL_2"/>
    <property type="match status" value="1"/>
</dbReference>
<accession>P68379</accession>
<accession>P05613</accession>
<protein>
    <recommendedName>
        <fullName>Ovomucoid</fullName>
    </recommendedName>
</protein>
<organism>
    <name type="scientific">Gallinula chloropus</name>
    <name type="common">Common moorhen</name>
    <dbReference type="NCBI Taxonomy" id="9123"/>
    <lineage>
        <taxon>Eukaryota</taxon>
        <taxon>Metazoa</taxon>
        <taxon>Chordata</taxon>
        <taxon>Craniata</taxon>
        <taxon>Vertebrata</taxon>
        <taxon>Euteleostomi</taxon>
        <taxon>Archelosauria</taxon>
        <taxon>Archosauria</taxon>
        <taxon>Dinosauria</taxon>
        <taxon>Saurischia</taxon>
        <taxon>Theropoda</taxon>
        <taxon>Coelurosauria</taxon>
        <taxon>Aves</taxon>
        <taxon>Neognathae</taxon>
        <taxon>Neoaves</taxon>
        <taxon>Gruiformes</taxon>
        <taxon>Rallidae</taxon>
        <taxon>Gallinula</taxon>
    </lineage>
</organism>
<evidence type="ECO:0000255" key="1">
    <source>
        <dbReference type="PROSITE-ProRule" id="PRU00798"/>
    </source>
</evidence>